<accession>P35206</accession>
<accession>D6VQ36</accession>
<comment type="function">
    <text evidence="2">Required for calcium regulation. May regulate calcium accumulation by a non-vacuole organelle. Also regulates the activity of CSH1 and SUR1 during mannosyl phosphorylinositol ceramide synthesis.</text>
</comment>
<comment type="subunit">
    <text evidence="2">Heterodimer of CSH1 and CSG2, and SUR1 and CSG2.</text>
</comment>
<comment type="interaction">
    <interactant intactId="EBI-2051140">
        <id>P35206</id>
    </interactant>
    <interactant intactId="EBI-20861">
        <id>P38287</id>
        <label>CSH1</label>
    </interactant>
    <organismsDiffer>false</organismsDiffer>
    <experiments>2</experiments>
</comment>
<comment type="interaction">
    <interactant intactId="EBI-2051140">
        <id>P35206</id>
    </interactant>
    <interactant intactId="EBI-17099">
        <id>Q02774</id>
        <label>SHR3</label>
    </interactant>
    <organismsDiffer>false</organismsDiffer>
    <experiments>3</experiments>
</comment>
<comment type="interaction">
    <interactant intactId="EBI-2051140">
        <id>P35206</id>
    </interactant>
    <interactant intactId="EBI-18569">
        <id>P33300</id>
        <label>SUR1</label>
    </interactant>
    <organismsDiffer>false</organismsDiffer>
    <experiments>2</experiments>
</comment>
<comment type="subcellular location">
    <subcellularLocation>
        <location evidence="3">Endoplasmic reticulum membrane</location>
        <topology evidence="3">Multi-pass membrane protein</topology>
    </subcellularLocation>
</comment>
<keyword id="KW-0256">Endoplasmic reticulum</keyword>
<keyword id="KW-0325">Glycoprotein</keyword>
<keyword id="KW-0472">Membrane</keyword>
<keyword id="KW-1185">Reference proteome</keyword>
<keyword id="KW-0732">Signal</keyword>
<keyword id="KW-0812">Transmembrane</keyword>
<keyword id="KW-1133">Transmembrane helix</keyword>
<feature type="signal peptide" evidence="1">
    <location>
        <begin position="1"/>
        <end position="17"/>
    </location>
</feature>
<feature type="chain" id="PRO_0000021012" description="Mannosyl phosphorylinositol ceramide synthase regulatory protein CSG2">
    <location>
        <begin position="18"/>
        <end position="410"/>
    </location>
</feature>
<feature type="topological domain" description="Lumenal" evidence="1">
    <location>
        <begin position="18"/>
        <end position="50"/>
    </location>
</feature>
<feature type="transmembrane region" description="Helical" evidence="1">
    <location>
        <begin position="51"/>
        <end position="71"/>
    </location>
</feature>
<feature type="topological domain" description="Cytoplasmic" evidence="1">
    <location>
        <begin position="72"/>
        <end position="141"/>
    </location>
</feature>
<feature type="transmembrane region" description="Helical" evidence="1">
    <location>
        <begin position="142"/>
        <end position="161"/>
    </location>
</feature>
<feature type="topological domain" description="Lumenal" evidence="1">
    <location>
        <begin position="162"/>
        <end position="167"/>
    </location>
</feature>
<feature type="transmembrane region" description="Helical" evidence="1">
    <location>
        <begin position="168"/>
        <end position="187"/>
    </location>
</feature>
<feature type="topological domain" description="Cytoplasmic" evidence="1">
    <location>
        <begin position="188"/>
        <end position="197"/>
    </location>
</feature>
<feature type="transmembrane region" description="Helical" evidence="1">
    <location>
        <begin position="198"/>
        <end position="217"/>
    </location>
</feature>
<feature type="topological domain" description="Lumenal" evidence="1">
    <location>
        <begin position="218"/>
        <end position="245"/>
    </location>
</feature>
<feature type="transmembrane region" description="Helical" evidence="1">
    <location>
        <begin position="246"/>
        <end position="265"/>
    </location>
</feature>
<feature type="topological domain" description="Cytoplasmic" evidence="1">
    <location>
        <begin position="266"/>
        <end position="285"/>
    </location>
</feature>
<feature type="transmembrane region" description="Helical" evidence="1">
    <location>
        <begin position="286"/>
        <end position="305"/>
    </location>
</feature>
<feature type="topological domain" description="Lumenal" evidence="1">
    <location>
        <begin position="306"/>
        <end position="324"/>
    </location>
</feature>
<feature type="transmembrane region" description="Helical" evidence="1">
    <location>
        <begin position="325"/>
        <end position="344"/>
    </location>
</feature>
<feature type="topological domain" description="Cytoplasmic" evidence="1">
    <location>
        <begin position="345"/>
        <end position="355"/>
    </location>
</feature>
<feature type="transmembrane region" description="Helical" evidence="1">
    <location>
        <begin position="356"/>
        <end position="374"/>
    </location>
</feature>
<feature type="topological domain" description="Lumenal" evidence="1">
    <location>
        <begin position="375"/>
        <end position="385"/>
    </location>
</feature>
<feature type="transmembrane region" description="Helical" evidence="1">
    <location>
        <begin position="386"/>
        <end position="404"/>
    </location>
</feature>
<feature type="topological domain" description="Cytoplasmic" evidence="1">
    <location>
        <begin position="405"/>
        <end position="410"/>
    </location>
</feature>
<feature type="glycosylation site" description="N-linked (GlcNAc...) asparagine" evidence="1">
    <location>
        <position position="35"/>
    </location>
</feature>
<feature type="glycosylation site" description="N-linked (GlcNAc...) asparagine" evidence="1">
    <location>
        <position position="49"/>
    </location>
</feature>
<feature type="sequence conflict" description="In Ref. 1; AAA34533." evidence="4" ref="1">
    <original>L</original>
    <variation>W</variation>
    <location>
        <position position="68"/>
    </location>
</feature>
<proteinExistence type="evidence at protein level"/>
<sequence length="410" mass="45442">MSTTLLWFSSVIGYVIQTKCLSNIQSKKEISVGPNGTIATPETNGDNGNSSSLTFYLTFMYFASWLLLVPASRLWEKMRPMFVSDSDSNRNSQFDNNNSGSVTNEDVDTFSHVLDDPQPRIPAQQQKQKIISVATFKYVAKLTVLALIMIVADLTYNMALSLSPAFDVALMQNTAIFEIVTLLYGVCGISRKNYVFRNFLIMMNAVIGILIISYTKATCDMLAGKLSVNPNTGELSDPFLFDRLKGALICGLGALIMGPFAVLWNRWFCSNISKNENSAVVLVKQSTHMALIGIIGMVILLPFIPKFPSRESVESISLFYNDKSFWFSLLGSIIFGSLPSLISILELNRKAPAEYLTTCNLGAIIFMGLAEWVCEPTQTTIVRWEVIGYIMLTVSLLVLSVTLGEGKYHH</sequence>
<organism>
    <name type="scientific">Saccharomyces cerevisiae (strain ATCC 204508 / S288c)</name>
    <name type="common">Baker's yeast</name>
    <dbReference type="NCBI Taxonomy" id="559292"/>
    <lineage>
        <taxon>Eukaryota</taxon>
        <taxon>Fungi</taxon>
        <taxon>Dikarya</taxon>
        <taxon>Ascomycota</taxon>
        <taxon>Saccharomycotina</taxon>
        <taxon>Saccharomycetes</taxon>
        <taxon>Saccharomycetales</taxon>
        <taxon>Saccharomycetaceae</taxon>
        <taxon>Saccharomyces</taxon>
    </lineage>
</organism>
<gene>
    <name type="primary">CSG2</name>
    <name type="synonym">CLS2</name>
    <name type="ordered locus">YBR036C</name>
    <name type="ORF">YBR0404</name>
</gene>
<protein>
    <recommendedName>
        <fullName>Mannosyl phosphorylinositol ceramide synthase regulatory protein CSG2</fullName>
    </recommendedName>
</protein>
<name>CSG2_YEAST</name>
<reference key="1">
    <citation type="journal article" date="1994" name="J. Biol. Chem.">
        <title>A novel protein, CSG2p, is required for Ca2+ regulation in Saccharomyces cerevisiae.</title>
        <authorList>
            <person name="Beeler T.J."/>
            <person name="Gable K."/>
            <person name="Zhao C."/>
            <person name="Dunn T."/>
        </authorList>
    </citation>
    <scope>NUCLEOTIDE SEQUENCE [MRNA]</scope>
</reference>
<reference key="2">
    <citation type="journal article" date="1995" name="Mol. Gen. Genet.">
        <title>The CLS2 gene encodes a protein with multiple membrane-spanning domains that is important Ca2+ tolerance in yeast.</title>
        <authorList>
            <person name="Takita Y."/>
            <person name="Ohya Y."/>
            <person name="Anraku Y."/>
        </authorList>
    </citation>
    <scope>NUCLEOTIDE SEQUENCE [GENOMIC DNA]</scope>
    <scope>SUBCELLULAR LOCATION</scope>
</reference>
<reference key="3">
    <citation type="journal article" date="1994" name="EMBO J.">
        <title>Complete DNA sequence of yeast chromosome II.</title>
        <authorList>
            <person name="Feldmann H."/>
            <person name="Aigle M."/>
            <person name="Aljinovic G."/>
            <person name="Andre B."/>
            <person name="Baclet M.C."/>
            <person name="Barthe C."/>
            <person name="Baur A."/>
            <person name="Becam A.-M."/>
            <person name="Biteau N."/>
            <person name="Boles E."/>
            <person name="Brandt T."/>
            <person name="Brendel M."/>
            <person name="Brueckner M."/>
            <person name="Bussereau F."/>
            <person name="Christiansen C."/>
            <person name="Contreras R."/>
            <person name="Crouzet M."/>
            <person name="Cziepluch C."/>
            <person name="Demolis N."/>
            <person name="Delaveau T."/>
            <person name="Doignon F."/>
            <person name="Domdey H."/>
            <person name="Duesterhus S."/>
            <person name="Dubois E."/>
            <person name="Dujon B."/>
            <person name="El Bakkoury M."/>
            <person name="Entian K.-D."/>
            <person name="Feuermann M."/>
            <person name="Fiers W."/>
            <person name="Fobo G.M."/>
            <person name="Fritz C."/>
            <person name="Gassenhuber J."/>
            <person name="Glansdorff N."/>
            <person name="Goffeau A."/>
            <person name="Grivell L.A."/>
            <person name="de Haan M."/>
            <person name="Hein C."/>
            <person name="Herbert C.J."/>
            <person name="Hollenberg C.P."/>
            <person name="Holmstroem K."/>
            <person name="Jacq C."/>
            <person name="Jacquet M."/>
            <person name="Jauniaux J.-C."/>
            <person name="Jonniaux J.-L."/>
            <person name="Kallesoee T."/>
            <person name="Kiesau P."/>
            <person name="Kirchrath L."/>
            <person name="Koetter P."/>
            <person name="Korol S."/>
            <person name="Liebl S."/>
            <person name="Logghe M."/>
            <person name="Lohan A.J.E."/>
            <person name="Louis E.J."/>
            <person name="Li Z.Y."/>
            <person name="Maat M.J."/>
            <person name="Mallet L."/>
            <person name="Mannhaupt G."/>
            <person name="Messenguy F."/>
            <person name="Miosga T."/>
            <person name="Molemans F."/>
            <person name="Mueller S."/>
            <person name="Nasr F."/>
            <person name="Obermaier B."/>
            <person name="Perea J."/>
            <person name="Pierard A."/>
            <person name="Piravandi E."/>
            <person name="Pohl F.M."/>
            <person name="Pohl T.M."/>
            <person name="Potier S."/>
            <person name="Proft M."/>
            <person name="Purnelle B."/>
            <person name="Ramezani Rad M."/>
            <person name="Rieger M."/>
            <person name="Rose M."/>
            <person name="Schaaff-Gerstenschlaeger I."/>
            <person name="Scherens B."/>
            <person name="Schwarzlose C."/>
            <person name="Skala J."/>
            <person name="Slonimski P.P."/>
            <person name="Smits P.H.M."/>
            <person name="Souciet J.-L."/>
            <person name="Steensma H.Y."/>
            <person name="Stucka R."/>
            <person name="Urrestarazu L.A."/>
            <person name="van der Aart Q.J.M."/>
            <person name="Van Dyck L."/>
            <person name="Vassarotti A."/>
            <person name="Vetter I."/>
            <person name="Vierendeels F."/>
            <person name="Vissers S."/>
            <person name="Wagner G."/>
            <person name="de Wergifosse P."/>
            <person name="Wolfe K.H."/>
            <person name="Zagulski M."/>
            <person name="Zimmermann F.K."/>
            <person name="Mewes H.-W."/>
            <person name="Kleine K."/>
        </authorList>
    </citation>
    <scope>NUCLEOTIDE SEQUENCE [LARGE SCALE GENOMIC DNA]</scope>
    <source>
        <strain>ATCC 204508 / S288c</strain>
    </source>
</reference>
<reference key="4">
    <citation type="journal article" date="2014" name="G3 (Bethesda)">
        <title>The reference genome sequence of Saccharomyces cerevisiae: Then and now.</title>
        <authorList>
            <person name="Engel S.R."/>
            <person name="Dietrich F.S."/>
            <person name="Fisk D.G."/>
            <person name="Binkley G."/>
            <person name="Balakrishnan R."/>
            <person name="Costanzo M.C."/>
            <person name="Dwight S.S."/>
            <person name="Hitz B.C."/>
            <person name="Karra K."/>
            <person name="Nash R.S."/>
            <person name="Weng S."/>
            <person name="Wong E.D."/>
            <person name="Lloyd P."/>
            <person name="Skrzypek M.S."/>
            <person name="Miyasato S.R."/>
            <person name="Simison M."/>
            <person name="Cherry J.M."/>
        </authorList>
    </citation>
    <scope>GENOME REANNOTATION</scope>
    <source>
        <strain>ATCC 204508 / S288c</strain>
    </source>
</reference>
<reference key="5">
    <citation type="journal article" date="1994" name="Yeast">
        <title>The complete sequence of a 33 kb fragment on the right arm of chromosome II from Saccharomyces cerevisiae reveals 16 open reading frames, including ten new open reading frames, five previously identified genes and a homologue of the SCO1 gene.</title>
        <authorList>
            <person name="Smits P.H.M."/>
            <person name="de Haan M."/>
            <person name="Maat C."/>
            <person name="Grivell L.A."/>
        </authorList>
    </citation>
    <scope>NUCLEOTIDE SEQUENCE [GENOMIC DNA] OF 116-410</scope>
    <source>
        <strain>ATCC 204508 / S288c</strain>
    </source>
</reference>
<reference key="6">
    <citation type="journal article" date="1989" name="Mol. Gen. Genet.">
        <title>Accumulation of the cytochrome c oxidase subunits I and II in yeast requires a mitochondrial membrane-associated protein, encoded by the nuclear SCO1 gene.</title>
        <authorList>
            <person name="Schulze M."/>
            <person name="Roedel G."/>
        </authorList>
    </citation>
    <scope>NUCLEOTIDE SEQUENCE [GENOMIC DNA] OF 1-92</scope>
</reference>
<reference key="7">
    <citation type="journal article" date="2003" name="J. Biol. Chem.">
        <title>Csg1p and newly identified Csh1p function in mannosylinositol phosphorylceramide synthesis by interacting with Csg2p.</title>
        <authorList>
            <person name="Uemura S."/>
            <person name="Kihara A."/>
            <person name="Inokuchi J."/>
            <person name="Igarashi Y."/>
        </authorList>
    </citation>
    <scope>FUNCTION</scope>
    <scope>SUBUNIT</scope>
</reference>
<reference key="8">
    <citation type="journal article" date="2006" name="Proc. Natl. Acad. Sci. U.S.A.">
        <title>A global topology map of the Saccharomyces cerevisiae membrane proteome.</title>
        <authorList>
            <person name="Kim H."/>
            <person name="Melen K."/>
            <person name="Oesterberg M."/>
            <person name="von Heijne G."/>
        </authorList>
    </citation>
    <scope>TOPOLOGY [LARGE SCALE ANALYSIS]</scope>
    <source>
        <strain>ATCC 208353 / W303-1A</strain>
    </source>
</reference>
<evidence type="ECO:0000255" key="1"/>
<evidence type="ECO:0000269" key="2">
    <source>
    </source>
</evidence>
<evidence type="ECO:0000269" key="3">
    <source>
    </source>
</evidence>
<evidence type="ECO:0000305" key="4"/>
<dbReference type="EMBL" id="L24113">
    <property type="protein sequence ID" value="AAA34533.1"/>
    <property type="molecule type" value="mRNA"/>
</dbReference>
<dbReference type="EMBL" id="D28120">
    <property type="protein sequence ID" value="BAA05666.1"/>
    <property type="molecule type" value="Genomic_DNA"/>
</dbReference>
<dbReference type="EMBL" id="Z35905">
    <property type="protein sequence ID" value="CAA84978.1"/>
    <property type="molecule type" value="Genomic_DNA"/>
</dbReference>
<dbReference type="EMBL" id="X76078">
    <property type="status" value="NOT_ANNOTATED_CDS"/>
    <property type="molecule type" value="Genomic_DNA"/>
</dbReference>
<dbReference type="EMBL" id="X17441">
    <property type="protein sequence ID" value="CAA35491.1"/>
    <property type="molecule type" value="Genomic_DNA"/>
</dbReference>
<dbReference type="EMBL" id="BK006936">
    <property type="protein sequence ID" value="DAA07156.1"/>
    <property type="molecule type" value="Genomic_DNA"/>
</dbReference>
<dbReference type="PIR" id="S45894">
    <property type="entry name" value="S45894"/>
</dbReference>
<dbReference type="RefSeq" id="NP_009592.1">
    <property type="nucleotide sequence ID" value="NM_001178384.1"/>
</dbReference>
<dbReference type="BioGRID" id="32737">
    <property type="interactions" value="981"/>
</dbReference>
<dbReference type="ComplexPortal" id="CPX-1739">
    <property type="entry name" value="Mannosyl phosphorylinositol ceramide synthase SUR1-CSG2"/>
</dbReference>
<dbReference type="ComplexPortal" id="CPX-1740">
    <property type="entry name" value="Mannosyl phosphorylinositol ceramide synthase CSH1-CSG2"/>
</dbReference>
<dbReference type="DIP" id="DIP-8095N"/>
<dbReference type="FunCoup" id="P35206">
    <property type="interactions" value="86"/>
</dbReference>
<dbReference type="IntAct" id="P35206">
    <property type="interactions" value="39"/>
</dbReference>
<dbReference type="MINT" id="P35206"/>
<dbReference type="STRING" id="4932.YBR036C"/>
<dbReference type="TCDB" id="2.A.7.27.1">
    <property type="family name" value="the drug/metabolite transporter (dmt) superfamily"/>
</dbReference>
<dbReference type="GlyCosmos" id="P35206">
    <property type="glycosylation" value="2 sites, No reported glycans"/>
</dbReference>
<dbReference type="GlyGen" id="P35206">
    <property type="glycosylation" value="2 sites"/>
</dbReference>
<dbReference type="iPTMnet" id="P35206"/>
<dbReference type="PaxDb" id="4932-YBR036C"/>
<dbReference type="PeptideAtlas" id="P35206"/>
<dbReference type="EnsemblFungi" id="YBR036C_mRNA">
    <property type="protein sequence ID" value="YBR036C"/>
    <property type="gene ID" value="YBR036C"/>
</dbReference>
<dbReference type="GeneID" id="852324"/>
<dbReference type="KEGG" id="sce:YBR036C"/>
<dbReference type="AGR" id="SGD:S000000240"/>
<dbReference type="SGD" id="S000000240">
    <property type="gene designation" value="CSG2"/>
</dbReference>
<dbReference type="VEuPathDB" id="FungiDB:YBR036C"/>
<dbReference type="eggNOG" id="ENOG502QY2R">
    <property type="taxonomic scope" value="Eukaryota"/>
</dbReference>
<dbReference type="HOGENOM" id="CLU_671228_0_0_1"/>
<dbReference type="InParanoid" id="P35206"/>
<dbReference type="OMA" id="WICEPTQ"/>
<dbReference type="OrthoDB" id="4069151at2759"/>
<dbReference type="BioCyc" id="MetaCyc:MONOMER3O-695"/>
<dbReference type="BioCyc" id="YEAST:MONOMER3O-695"/>
<dbReference type="BioGRID-ORCS" id="852324">
    <property type="hits" value="8 hits in 10 CRISPR screens"/>
</dbReference>
<dbReference type="PRO" id="PR:P35206"/>
<dbReference type="Proteomes" id="UP000002311">
    <property type="component" value="Chromosome II"/>
</dbReference>
<dbReference type="RNAct" id="P35206">
    <property type="molecule type" value="protein"/>
</dbReference>
<dbReference type="GO" id="GO:0005783">
    <property type="term" value="C:endoplasmic reticulum"/>
    <property type="evidence" value="ECO:0007005"/>
    <property type="project" value="SGD"/>
</dbReference>
<dbReference type="GO" id="GO:0005789">
    <property type="term" value="C:endoplasmic reticulum membrane"/>
    <property type="evidence" value="ECO:0000314"/>
    <property type="project" value="SGD"/>
</dbReference>
<dbReference type="GO" id="GO:0000324">
    <property type="term" value="C:fungal-type vacuole"/>
    <property type="evidence" value="ECO:0007005"/>
    <property type="project" value="SGD"/>
</dbReference>
<dbReference type="GO" id="GO:0005794">
    <property type="term" value="C:Golgi apparatus"/>
    <property type="evidence" value="ECO:0000314"/>
    <property type="project" value="ComplexPortal"/>
</dbReference>
<dbReference type="GO" id="GO:0031501">
    <property type="term" value="C:mannosyltransferase complex"/>
    <property type="evidence" value="ECO:0000314"/>
    <property type="project" value="ComplexPortal"/>
</dbReference>
<dbReference type="GO" id="GO:0030234">
    <property type="term" value="F:enzyme regulator activity"/>
    <property type="evidence" value="ECO:0000315"/>
    <property type="project" value="SGD"/>
</dbReference>
<dbReference type="GO" id="GO:0015278">
    <property type="term" value="F:intracellularly gated calcium channel activity"/>
    <property type="evidence" value="ECO:0000314"/>
    <property type="project" value="SGD"/>
</dbReference>
<dbReference type="GO" id="GO:0032469">
    <property type="term" value="P:endoplasmic reticulum calcium ion homeostasis"/>
    <property type="evidence" value="ECO:0000315"/>
    <property type="project" value="SGD"/>
</dbReference>
<dbReference type="GO" id="GO:0006688">
    <property type="term" value="P:glycosphingolipid biosynthetic process"/>
    <property type="evidence" value="ECO:0000315"/>
    <property type="project" value="SGD"/>
</dbReference>
<dbReference type="GO" id="GO:0006874">
    <property type="term" value="P:intracellular calcium ion homeostasis"/>
    <property type="evidence" value="ECO:0000315"/>
    <property type="project" value="SGD"/>
</dbReference>
<dbReference type="GO" id="GO:0006676">
    <property type="term" value="P:mannosyl diphosphorylinositol ceramide metabolic process"/>
    <property type="evidence" value="ECO:0000314"/>
    <property type="project" value="ComplexPortal"/>
</dbReference>
<dbReference type="GO" id="GO:1903514">
    <property type="term" value="P:release of sequestered calcium ion into cytosol by endoplasmic reticulum"/>
    <property type="evidence" value="ECO:0000315"/>
    <property type="project" value="SGD"/>
</dbReference>
<dbReference type="InterPro" id="IPR031581">
    <property type="entry name" value="Csg2"/>
</dbReference>
<dbReference type="InterPro" id="IPR018247">
    <property type="entry name" value="EF_Hand_1_Ca_BS"/>
</dbReference>
<dbReference type="Pfam" id="PF16965">
    <property type="entry name" value="CSG2"/>
    <property type="match status" value="1"/>
</dbReference>